<name>H14A1_CYRHA</name>
<comment type="subcellular location">
    <subcellularLocation>
        <location evidence="1">Secreted</location>
    </subcellularLocation>
</comment>
<comment type="tissue specificity">
    <text>Expressed by the venom gland.</text>
</comment>
<comment type="similarity">
    <text evidence="4">Belongs to the AVIT (prokineticin) family.</text>
</comment>
<keyword id="KW-1015">Disulfide bond</keyword>
<keyword id="KW-0964">Secreted</keyword>
<keyword id="KW-0732">Signal</keyword>
<keyword id="KW-0800">Toxin</keyword>
<feature type="signal peptide" evidence="3">
    <location>
        <begin position="1"/>
        <end position="21"/>
    </location>
</feature>
<feature type="chain" id="PRO_0000400847" description="U8-theraphotoxin-Hhn1a">
    <location>
        <begin position="22"/>
        <end position="84"/>
    </location>
</feature>
<feature type="disulfide bond" evidence="2">
    <location>
        <begin position="23"/>
        <end position="35"/>
    </location>
</feature>
<feature type="disulfide bond" evidence="2">
    <location>
        <begin position="29"/>
        <end position="44"/>
    </location>
</feature>
<feature type="disulfide bond" evidence="2">
    <location>
        <begin position="34"/>
        <end position="67"/>
    </location>
</feature>
<feature type="disulfide bond" evidence="2">
    <location>
        <begin position="54"/>
        <end position="75"/>
    </location>
</feature>
<feature type="disulfide bond" evidence="2">
    <location>
        <begin position="69"/>
        <end position="81"/>
    </location>
</feature>
<proteinExistence type="evidence at transcript level"/>
<accession>D2Y2C0</accession>
<reference key="1">
    <citation type="journal article" date="2010" name="J. Proteome Res.">
        <title>Molecular diversification of peptide toxins from the tarantula Haplopelma hainanum (Ornithoctonus hainana) venom based on transcriptomic, peptidomic, and genomic analyses.</title>
        <authorList>
            <person name="Tang X."/>
            <person name="Zhang Y."/>
            <person name="Hu W."/>
            <person name="Xu D."/>
            <person name="Tao H."/>
            <person name="Yang X."/>
            <person name="Li Y."/>
            <person name="Jiang L."/>
            <person name="Liang S."/>
        </authorList>
    </citation>
    <scope>NUCLEOTIDE SEQUENCE [LARGE SCALE MRNA]</scope>
    <source>
        <tissue>Venom gland</tissue>
    </source>
</reference>
<organism>
    <name type="scientific">Cyriopagopus hainanus</name>
    <name type="common">Chinese bird spider</name>
    <name type="synonym">Haplopelma hainanum</name>
    <dbReference type="NCBI Taxonomy" id="209901"/>
    <lineage>
        <taxon>Eukaryota</taxon>
        <taxon>Metazoa</taxon>
        <taxon>Ecdysozoa</taxon>
        <taxon>Arthropoda</taxon>
        <taxon>Chelicerata</taxon>
        <taxon>Arachnida</taxon>
        <taxon>Araneae</taxon>
        <taxon>Mygalomorphae</taxon>
        <taxon>Theraphosidae</taxon>
        <taxon>Haplopelma</taxon>
    </lineage>
</organism>
<protein>
    <recommendedName>
        <fullName>U8-theraphotoxin-Hhn1a</fullName>
        <shortName>U8-TRTX-Hhn1a</shortName>
    </recommendedName>
    <alternativeName>
        <fullName evidence="5">Hainantoxin-XIV</fullName>
        <shortName evidence="5">HNTX-XIV</shortName>
    </alternativeName>
</protein>
<sequence length="84" mass="9310">MKVVLLECLVWMMAMMELVSCECWSQADCSDGHCCAGSSFSKNCQPYGGDGEQCEPRNKYEVYSTGCPCEENLMCSVINRCQSA</sequence>
<dbReference type="EMBL" id="GU292997">
    <property type="protein sequence ID" value="ADB56813.1"/>
    <property type="molecule type" value="mRNA"/>
</dbReference>
<dbReference type="SMR" id="D2Y2C0"/>
<dbReference type="ArachnoServer" id="AS001558">
    <property type="toxin name" value="U8-theraphotoxin-Hhn1a"/>
</dbReference>
<dbReference type="GO" id="GO:0005576">
    <property type="term" value="C:extracellular region"/>
    <property type="evidence" value="ECO:0007669"/>
    <property type="project" value="UniProtKB-SubCell"/>
</dbReference>
<dbReference type="GO" id="GO:0090729">
    <property type="term" value="F:toxin activity"/>
    <property type="evidence" value="ECO:0007669"/>
    <property type="project" value="UniProtKB-KW"/>
</dbReference>
<dbReference type="Gene3D" id="2.10.80.10">
    <property type="entry name" value="Lipase, subunit A"/>
    <property type="match status" value="1"/>
</dbReference>
<dbReference type="InterPro" id="IPR023569">
    <property type="entry name" value="Prokineticin_domain"/>
</dbReference>
<dbReference type="Pfam" id="PF06607">
    <property type="entry name" value="Prokineticin"/>
    <property type="match status" value="1"/>
</dbReference>
<evidence type="ECO:0000250" key="1"/>
<evidence type="ECO:0000250" key="2">
    <source>
        <dbReference type="UniProtKB" id="Q9PW66"/>
    </source>
</evidence>
<evidence type="ECO:0000255" key="3"/>
<evidence type="ECO:0000305" key="4"/>
<evidence type="ECO:0000312" key="5">
    <source>
        <dbReference type="EMBL" id="ADB56813.1"/>
    </source>
</evidence>